<organism>
    <name type="scientific">Candida glabrata (strain ATCC 2001 / BCRC 20586 / JCM 3761 / NBRC 0622 / NRRL Y-65 / CBS 138)</name>
    <name type="common">Yeast</name>
    <name type="synonym">Nakaseomyces glabratus</name>
    <dbReference type="NCBI Taxonomy" id="284593"/>
    <lineage>
        <taxon>Eukaryota</taxon>
        <taxon>Fungi</taxon>
        <taxon>Dikarya</taxon>
        <taxon>Ascomycota</taxon>
        <taxon>Saccharomycotina</taxon>
        <taxon>Saccharomycetes</taxon>
        <taxon>Saccharomycetales</taxon>
        <taxon>Saccharomycetaceae</taxon>
        <taxon>Nakaseomyces</taxon>
    </lineage>
</organism>
<gene>
    <name evidence="8" type="primary">ATM1</name>
    <name type="ordered locus">CAGL0M13739g</name>
</gene>
<accession>Q6FIK3</accession>
<reference key="1">
    <citation type="journal article" date="2004" name="Nature">
        <title>Genome evolution in yeasts.</title>
        <authorList>
            <person name="Dujon B."/>
            <person name="Sherman D."/>
            <person name="Fischer G."/>
            <person name="Durrens P."/>
            <person name="Casaregola S."/>
            <person name="Lafontaine I."/>
            <person name="de Montigny J."/>
            <person name="Marck C."/>
            <person name="Neuveglise C."/>
            <person name="Talla E."/>
            <person name="Goffard N."/>
            <person name="Frangeul L."/>
            <person name="Aigle M."/>
            <person name="Anthouard V."/>
            <person name="Babour A."/>
            <person name="Barbe V."/>
            <person name="Barnay S."/>
            <person name="Blanchin S."/>
            <person name="Beckerich J.-M."/>
            <person name="Beyne E."/>
            <person name="Bleykasten C."/>
            <person name="Boisrame A."/>
            <person name="Boyer J."/>
            <person name="Cattolico L."/>
            <person name="Confanioleri F."/>
            <person name="de Daruvar A."/>
            <person name="Despons L."/>
            <person name="Fabre E."/>
            <person name="Fairhead C."/>
            <person name="Ferry-Dumazet H."/>
            <person name="Groppi A."/>
            <person name="Hantraye F."/>
            <person name="Hennequin C."/>
            <person name="Jauniaux N."/>
            <person name="Joyet P."/>
            <person name="Kachouri R."/>
            <person name="Kerrest A."/>
            <person name="Koszul R."/>
            <person name="Lemaire M."/>
            <person name="Lesur I."/>
            <person name="Ma L."/>
            <person name="Muller H."/>
            <person name="Nicaud J.-M."/>
            <person name="Nikolski M."/>
            <person name="Oztas S."/>
            <person name="Ozier-Kalogeropoulos O."/>
            <person name="Pellenz S."/>
            <person name="Potier S."/>
            <person name="Richard G.-F."/>
            <person name="Straub M.-L."/>
            <person name="Suleau A."/>
            <person name="Swennen D."/>
            <person name="Tekaia F."/>
            <person name="Wesolowski-Louvel M."/>
            <person name="Westhof E."/>
            <person name="Wirth B."/>
            <person name="Zeniou-Meyer M."/>
            <person name="Zivanovic Y."/>
            <person name="Bolotin-Fukuhara M."/>
            <person name="Thierry A."/>
            <person name="Bouchier C."/>
            <person name="Caudron B."/>
            <person name="Scarpelli C."/>
            <person name="Gaillardin C."/>
            <person name="Weissenbach J."/>
            <person name="Wincker P."/>
            <person name="Souciet J.-L."/>
        </authorList>
    </citation>
    <scope>NUCLEOTIDE SEQUENCE [LARGE SCALE GENOMIC DNA]</scope>
    <source>
        <strain>ATCC 2001 / BCRC 20586 / JCM 3761 / NBRC 0622 / NRRL Y-65 / CBS 138</strain>
    </source>
</reference>
<sequence length="727" mass="81305">MLIGGAQNRLYQLRTSNILGLLRTRSALRVGSKVELRCPYNNWTNLGRSHFSSTSIPPTFKSKTFGREKGLLAHNINVKRLSSTVSKSKLPNEDTAHNASEKNSKKTDTKAVNISELKILKDLFKYIWPRGNTKVKVRVLLALALLIGAKVLNVQVPFFFKQIIDGMNVDWSDATVALPAALGLTIMCYGLARFGAVLFGELRNAIFARVAQNAIRNVSLQTFEHLMKLDLGWHLSRQTGGLTRAMDRGTKGISYVLSAMVFHIIPITFEISVVCGILTYQFGASFAGITFTTMLLYSIFTIRTTAWRTRFRKEANKADNKGASVALDSLINFEAVKYFNNESYLANKYHNSLIKYRDSQVKVAQSLAFLNSGQSLIFTTALTGMMYMGCTGVIGGDLTVGDLVLINQLVFQLSVPLNFLGSVYRELKQSLIDMESLFKLRKNQVKIQNCSQPKSISKSDGPFEIKFENVTFGYDGQRKILKNASFTIPAGMKTAIAGPSGSGKSTVLKLVFRFYDPEEGRVLVNGVDVREYDIDQLRKAIGVVPQDTPLFNDTIWENVKFGRIEASDEEITRVIDKAQLSDLIAKLPQGSSTIVGERGLMISGGEKQRLAIARVLLKDADIMFFDEATSALDTHTEQSLLRTIRRNFNSGEKTSVYIAHRLRTIADADKIIVLEEGTVREEGTHQELLARENSLYKELWRIQEDLDLLEDEINHEKETLEKLNKSI</sequence>
<dbReference type="EC" id="7.-.-.-" evidence="2"/>
<dbReference type="EMBL" id="CR380959">
    <property type="protein sequence ID" value="CAG62921.1"/>
    <property type="molecule type" value="Genomic_DNA"/>
</dbReference>
<dbReference type="RefSeq" id="XP_449941.1">
    <property type="nucleotide sequence ID" value="XM_449941.1"/>
</dbReference>
<dbReference type="SMR" id="Q6FIK3"/>
<dbReference type="FunCoup" id="Q6FIK3">
    <property type="interactions" value="704"/>
</dbReference>
<dbReference type="STRING" id="284593.Q6FIK3"/>
<dbReference type="EnsemblFungi" id="CAGL0M13739g-T">
    <property type="protein sequence ID" value="CAGL0M13739g-T-p1"/>
    <property type="gene ID" value="CAGL0M13739g"/>
</dbReference>
<dbReference type="GeneID" id="2891232"/>
<dbReference type="KEGG" id="cgr:2891232"/>
<dbReference type="CGD" id="CAL0136911">
    <property type="gene designation" value="ATM1"/>
</dbReference>
<dbReference type="VEuPathDB" id="FungiDB:CAGL0M13739g"/>
<dbReference type="eggNOG" id="KOG0057">
    <property type="taxonomic scope" value="Eukaryota"/>
</dbReference>
<dbReference type="HOGENOM" id="CLU_000604_84_1_1"/>
<dbReference type="InParanoid" id="Q6FIK3"/>
<dbReference type="OMA" id="VFHIIPI"/>
<dbReference type="Proteomes" id="UP000002428">
    <property type="component" value="Chromosome M"/>
</dbReference>
<dbReference type="GO" id="GO:0005743">
    <property type="term" value="C:mitochondrial inner membrane"/>
    <property type="evidence" value="ECO:0007669"/>
    <property type="project" value="UniProtKB-SubCell"/>
</dbReference>
<dbReference type="GO" id="GO:0140359">
    <property type="term" value="F:ABC-type transporter activity"/>
    <property type="evidence" value="ECO:0007669"/>
    <property type="project" value="InterPro"/>
</dbReference>
<dbReference type="GO" id="GO:0005524">
    <property type="term" value="F:ATP binding"/>
    <property type="evidence" value="ECO:0007669"/>
    <property type="project" value="UniProtKB-KW"/>
</dbReference>
<dbReference type="GO" id="GO:0016887">
    <property type="term" value="F:ATP hydrolysis activity"/>
    <property type="evidence" value="ECO:0007669"/>
    <property type="project" value="EnsemblFungi"/>
</dbReference>
<dbReference type="GO" id="GO:0006879">
    <property type="term" value="P:intracellular iron ion homeostasis"/>
    <property type="evidence" value="ECO:0007669"/>
    <property type="project" value="TreeGrafter"/>
</dbReference>
<dbReference type="GO" id="GO:0016226">
    <property type="term" value="P:iron-sulfur cluster assembly"/>
    <property type="evidence" value="ECO:0007669"/>
    <property type="project" value="EnsemblFungi"/>
</dbReference>
<dbReference type="GO" id="GO:0140466">
    <property type="term" value="P:iron-sulfur cluster export from the mitochondrion"/>
    <property type="evidence" value="ECO:0007669"/>
    <property type="project" value="EnsemblFungi"/>
</dbReference>
<dbReference type="CDD" id="cd18582">
    <property type="entry name" value="ABC_6TM_ATM1_ABCB7"/>
    <property type="match status" value="1"/>
</dbReference>
<dbReference type="FunFam" id="1.20.1560.10:FF:000004">
    <property type="entry name" value="ATP-binding cassette sub-family B member 7"/>
    <property type="match status" value="1"/>
</dbReference>
<dbReference type="FunFam" id="3.40.50.300:FF:000287">
    <property type="entry name" value="Multidrug ABC transporter ATP-binding protein"/>
    <property type="match status" value="1"/>
</dbReference>
<dbReference type="Gene3D" id="1.20.1560.10">
    <property type="entry name" value="ABC transporter type 1, transmembrane domain"/>
    <property type="match status" value="1"/>
</dbReference>
<dbReference type="Gene3D" id="3.40.50.300">
    <property type="entry name" value="P-loop containing nucleotide triphosphate hydrolases"/>
    <property type="match status" value="1"/>
</dbReference>
<dbReference type="InterPro" id="IPR003593">
    <property type="entry name" value="AAA+_ATPase"/>
</dbReference>
<dbReference type="InterPro" id="IPR011527">
    <property type="entry name" value="ABC1_TM_dom"/>
</dbReference>
<dbReference type="InterPro" id="IPR036640">
    <property type="entry name" value="ABC1_TM_sf"/>
</dbReference>
<dbReference type="InterPro" id="IPR003439">
    <property type="entry name" value="ABC_transporter-like_ATP-bd"/>
</dbReference>
<dbReference type="InterPro" id="IPR017871">
    <property type="entry name" value="ABC_transporter-like_CS"/>
</dbReference>
<dbReference type="InterPro" id="IPR027417">
    <property type="entry name" value="P-loop_NTPase"/>
</dbReference>
<dbReference type="InterPro" id="IPR039421">
    <property type="entry name" value="Type_1_exporter"/>
</dbReference>
<dbReference type="PANTHER" id="PTHR24221">
    <property type="entry name" value="ATP-BINDING CASSETTE SUB-FAMILY B"/>
    <property type="match status" value="1"/>
</dbReference>
<dbReference type="PANTHER" id="PTHR24221:SF402">
    <property type="entry name" value="IRON-SULFUR CLUSTERS TRANSPORTER ABCB7, MITOCHONDRIAL"/>
    <property type="match status" value="1"/>
</dbReference>
<dbReference type="Pfam" id="PF00664">
    <property type="entry name" value="ABC_membrane"/>
    <property type="match status" value="1"/>
</dbReference>
<dbReference type="Pfam" id="PF00005">
    <property type="entry name" value="ABC_tran"/>
    <property type="match status" value="1"/>
</dbReference>
<dbReference type="SMART" id="SM00382">
    <property type="entry name" value="AAA"/>
    <property type="match status" value="1"/>
</dbReference>
<dbReference type="SUPFAM" id="SSF90123">
    <property type="entry name" value="ABC transporter transmembrane region"/>
    <property type="match status" value="1"/>
</dbReference>
<dbReference type="SUPFAM" id="SSF52540">
    <property type="entry name" value="P-loop containing nucleoside triphosphate hydrolases"/>
    <property type="match status" value="1"/>
</dbReference>
<dbReference type="PROSITE" id="PS50929">
    <property type="entry name" value="ABC_TM1F"/>
    <property type="match status" value="1"/>
</dbReference>
<dbReference type="PROSITE" id="PS00211">
    <property type="entry name" value="ABC_TRANSPORTER_1"/>
    <property type="match status" value="1"/>
</dbReference>
<dbReference type="PROSITE" id="PS50893">
    <property type="entry name" value="ABC_TRANSPORTER_2"/>
    <property type="match status" value="1"/>
</dbReference>
<protein>
    <recommendedName>
        <fullName evidence="8">Iron-sulfur clusters transporter ATM1, mitochondrial</fullName>
        <ecNumber evidence="2">7.-.-.-</ecNumber>
    </recommendedName>
</protein>
<comment type="function">
    <text evidence="1">Performs an essential function in the generation of cytoplasmic iron-sulfur proteins by mediating the ATP-dependent export of Fe/S cluster precursors synthesized by NFS1 and other mitochondrial proteins (By similarity). Hydrolyzes ATP (By similarity). Binds glutathione and may function by transporting a glutathione-conjugated iron-sulfur compound (By similarity).</text>
</comment>
<comment type="subunit">
    <text evidence="1">Homodimer.</text>
</comment>
<comment type="subcellular location">
    <subcellularLocation>
        <location evidence="1">Mitochondrion inner membrane</location>
        <topology evidence="6">Multi-pass membrane protein</topology>
    </subcellularLocation>
</comment>
<comment type="similarity">
    <text evidence="8">Belongs to the ABC transporter superfamily. ABCB family. Heavy Metal importer (TC 3.A.1.210) subfamily.</text>
</comment>
<feature type="transit peptide" description="Mitochondrion" evidence="4">
    <location>
        <begin position="1"/>
        <end position="25"/>
    </location>
</feature>
<feature type="chain" id="PRO_0000255441" description="Iron-sulfur clusters transporter ATM1, mitochondrial">
    <location>
        <begin position="26"/>
        <end position="727"/>
    </location>
</feature>
<feature type="topological domain" description="Mitochondrial matrix" evidence="1">
    <location>
        <begin position="26"/>
        <end position="138"/>
    </location>
</feature>
<feature type="transmembrane region" description="Helical" evidence="6">
    <location>
        <begin position="139"/>
        <end position="160"/>
    </location>
</feature>
<feature type="topological domain" description="Mitochondrial intermembrane" evidence="1">
    <location>
        <begin position="161"/>
        <end position="183"/>
    </location>
</feature>
<feature type="transmembrane region" description="Helical" evidence="6">
    <location>
        <begin position="184"/>
        <end position="207"/>
    </location>
</feature>
<feature type="topological domain" description="Mitochondrial matrix" evidence="1">
    <location>
        <begin position="208"/>
        <end position="256"/>
    </location>
</feature>
<feature type="transmembrane region" description="Helical" evidence="6">
    <location>
        <begin position="257"/>
        <end position="280"/>
    </location>
</feature>
<feature type="topological domain" description="Mitochondrial intermembrane" evidence="1">
    <location>
        <position position="281"/>
    </location>
</feature>
<feature type="transmembrane region" description="Helical" evidence="6">
    <location>
        <begin position="282"/>
        <end position="302"/>
    </location>
</feature>
<feature type="topological domain" description="Mitochondrial matrix" evidence="1">
    <location>
        <begin position="303"/>
        <end position="368"/>
    </location>
</feature>
<feature type="transmembrane region" description="Helical" evidence="6">
    <location>
        <begin position="369"/>
        <end position="387"/>
    </location>
</feature>
<feature type="topological domain" description="Mitochondrial intermembrane" evidence="1">
    <location>
        <begin position="388"/>
        <end position="402"/>
    </location>
</feature>
<feature type="transmembrane region" description="Helical" evidence="6">
    <location>
        <begin position="403"/>
        <end position="424"/>
    </location>
</feature>
<feature type="topological domain" description="Mitochondrial matrix" evidence="1">
    <location>
        <begin position="425"/>
        <end position="727"/>
    </location>
</feature>
<feature type="domain" description="ABC transmembrane type-1" evidence="6">
    <location>
        <begin position="139"/>
        <end position="429"/>
    </location>
</feature>
<feature type="domain" description="ABC transporter" evidence="5">
    <location>
        <begin position="465"/>
        <end position="701"/>
    </location>
</feature>
<feature type="region of interest" description="Disordered" evidence="7">
    <location>
        <begin position="87"/>
        <end position="107"/>
    </location>
</feature>
<feature type="compositionally biased region" description="Basic and acidic residues" evidence="7">
    <location>
        <begin position="90"/>
        <end position="107"/>
    </location>
</feature>
<feature type="binding site" evidence="1">
    <location>
        <begin position="308"/>
        <end position="312"/>
    </location>
    <ligand>
        <name>glutathione</name>
        <dbReference type="ChEBI" id="CHEBI:57925"/>
    </ligand>
</feature>
<feature type="binding site" evidence="1">
    <location>
        <begin position="371"/>
        <end position="374"/>
    </location>
    <ligand>
        <name>glutathione</name>
        <dbReference type="ChEBI" id="CHEBI:57925"/>
    </ligand>
</feature>
<feature type="binding site" evidence="2">
    <location>
        <position position="421"/>
    </location>
    <ligand>
        <name>glutathione</name>
        <dbReference type="ChEBI" id="CHEBI:57925"/>
    </ligand>
</feature>
<feature type="binding site" evidence="3">
    <location>
        <position position="474"/>
    </location>
    <ligand>
        <name>ATP</name>
        <dbReference type="ChEBI" id="CHEBI:30616"/>
    </ligand>
</feature>
<feature type="binding site" evidence="5">
    <location>
        <begin position="498"/>
        <end position="509"/>
    </location>
    <ligand>
        <name>ATP</name>
        <dbReference type="ChEBI" id="CHEBI:30616"/>
    </ligand>
</feature>
<evidence type="ECO:0000250" key="1">
    <source>
        <dbReference type="UniProtKB" id="P40416"/>
    </source>
</evidence>
<evidence type="ECO:0000250" key="2">
    <source>
        <dbReference type="UniProtKB" id="Q2G506"/>
    </source>
</evidence>
<evidence type="ECO:0000250" key="3">
    <source>
        <dbReference type="UniProtKB" id="Q9NP58"/>
    </source>
</evidence>
<evidence type="ECO:0000255" key="4"/>
<evidence type="ECO:0000255" key="5">
    <source>
        <dbReference type="PROSITE-ProRule" id="PRU00434"/>
    </source>
</evidence>
<evidence type="ECO:0000255" key="6">
    <source>
        <dbReference type="PROSITE-ProRule" id="PRU00441"/>
    </source>
</evidence>
<evidence type="ECO:0000256" key="7">
    <source>
        <dbReference type="SAM" id="MobiDB-lite"/>
    </source>
</evidence>
<evidence type="ECO:0000305" key="8"/>
<name>ATM1_CANGA</name>
<keyword id="KW-0067">ATP-binding</keyword>
<keyword id="KW-0472">Membrane</keyword>
<keyword id="KW-0496">Mitochondrion</keyword>
<keyword id="KW-0999">Mitochondrion inner membrane</keyword>
<keyword id="KW-0547">Nucleotide-binding</keyword>
<keyword id="KW-1185">Reference proteome</keyword>
<keyword id="KW-0809">Transit peptide</keyword>
<keyword id="KW-1278">Translocase</keyword>
<keyword id="KW-0812">Transmembrane</keyword>
<keyword id="KW-1133">Transmembrane helix</keyword>
<keyword id="KW-0813">Transport</keyword>
<proteinExistence type="inferred from homology"/>